<keyword id="KW-0378">Hydrolase</keyword>
<sequence>MIRATSLYAAIDLGSNSFHMLVVREVAGTLQTLARIKRKVRLAAGLYGDNRLSSDAMQRGWQCLRLFAEHLQDIPPTQVRVVATATLRLATNAAEFLGPASAILGCPVQVISGEEEARLIYQGVAHTTGGSDERLVVDIGGGSTELVVGRGAQALELFSLEMGCVTWLERYFNDRSLTRENFERAEQAAREKIRPVAFRLLAQGWQVCVGASGTVQALQEIMVAQGMDEHITLSKLLQLKQRAIHCGKLEELEIEGLTLERALVFPSGLAILLAVFAELGITTMTLAGGALREGMMYGMMALPVGGDIRQRTLENLQRRYQLDTEQAQRVTWLADGFARQVAEAWQLDERCFTLLRCASMIHEIGLSIDIKRAPQHAAYLVRHTDLPGFTPAQQKLIATLLQNQSNHINLTQLNEQNCLAPRIAQRLCRLMRLAIIFASRRRDDALPAVELRAAEETLYVILPQGWLSQHPLRAEYLEQESQWQSYVHWPLLLEETSQV</sequence>
<organism>
    <name type="scientific">Sodalis glossinidius (strain morsitans)</name>
    <dbReference type="NCBI Taxonomy" id="343509"/>
    <lineage>
        <taxon>Bacteria</taxon>
        <taxon>Pseudomonadati</taxon>
        <taxon>Pseudomonadota</taxon>
        <taxon>Gammaproteobacteria</taxon>
        <taxon>Enterobacterales</taxon>
        <taxon>Bruguierivoracaceae</taxon>
        <taxon>Sodalis</taxon>
    </lineage>
</organism>
<comment type="function">
    <text evidence="1">Catalyzes the conversion of pppGpp to ppGpp. Guanosine pentaphosphate (pppGpp) is a cytoplasmic signaling molecule which together with ppGpp controls the 'stringent response', an adaptive process that allows bacteria to respond to amino acid starvation, resulting in the coordinated regulation of numerous cellular activities.</text>
</comment>
<comment type="catalytic activity">
    <reaction evidence="1">
        <text>guanosine 3'-diphosphate 5'-triphosphate + H2O = guanosine 3',5'-bis(diphosphate) + phosphate + H(+)</text>
        <dbReference type="Rhea" id="RHEA:13073"/>
        <dbReference type="ChEBI" id="CHEBI:15377"/>
        <dbReference type="ChEBI" id="CHEBI:15378"/>
        <dbReference type="ChEBI" id="CHEBI:43474"/>
        <dbReference type="ChEBI" id="CHEBI:77828"/>
        <dbReference type="ChEBI" id="CHEBI:142410"/>
        <dbReference type="EC" id="3.6.1.40"/>
    </reaction>
</comment>
<comment type="pathway">
    <text evidence="1">Purine metabolism; ppGpp biosynthesis; ppGpp from GTP: step 2/2.</text>
</comment>
<comment type="similarity">
    <text evidence="1">Belongs to the GppA/Ppx family. GppA subfamily.</text>
</comment>
<reference key="1">
    <citation type="journal article" date="2006" name="Genome Res.">
        <title>Massive genome erosion and functional adaptations provide insights into the symbiotic lifestyle of Sodalis glossinidius in the tsetse host.</title>
        <authorList>
            <person name="Toh H."/>
            <person name="Weiss B.L."/>
            <person name="Perkin S.A.H."/>
            <person name="Yamashita A."/>
            <person name="Oshima K."/>
            <person name="Hattori M."/>
            <person name="Aksoy S."/>
        </authorList>
    </citation>
    <scope>NUCLEOTIDE SEQUENCE [LARGE SCALE GENOMIC DNA]</scope>
    <source>
        <strain>morsitans</strain>
    </source>
</reference>
<feature type="chain" id="PRO_0000314500" description="Guanosine-5'-triphosphate,3'-diphosphate pyrophosphatase">
    <location>
        <begin position="1"/>
        <end position="499"/>
    </location>
</feature>
<protein>
    <recommendedName>
        <fullName evidence="1">Guanosine-5'-triphosphate,3'-diphosphate pyrophosphatase</fullName>
        <ecNumber evidence="1">3.6.1.40</ecNumber>
    </recommendedName>
    <alternativeName>
        <fullName evidence="1">Guanosine pentaphosphate phosphohydrolase</fullName>
    </alternativeName>
    <alternativeName>
        <fullName evidence="1">pppGpp-5'-phosphohydrolase</fullName>
    </alternativeName>
</protein>
<name>GPPA_SODGM</name>
<evidence type="ECO:0000255" key="1">
    <source>
        <dbReference type="HAMAP-Rule" id="MF_01550"/>
    </source>
</evidence>
<dbReference type="EC" id="3.6.1.40" evidence="1"/>
<dbReference type="EMBL" id="AP008232">
    <property type="protein sequence ID" value="BAE75664.1"/>
    <property type="molecule type" value="Genomic_DNA"/>
</dbReference>
<dbReference type="RefSeq" id="WP_011412195.1">
    <property type="nucleotide sequence ID" value="NC_007712.1"/>
</dbReference>
<dbReference type="SMR" id="Q2NQB1"/>
<dbReference type="STRING" id="343509.SG2389"/>
<dbReference type="KEGG" id="sgl:SG2389"/>
<dbReference type="eggNOG" id="COG0248">
    <property type="taxonomic scope" value="Bacteria"/>
</dbReference>
<dbReference type="HOGENOM" id="CLU_025908_4_0_6"/>
<dbReference type="OrthoDB" id="9793035at2"/>
<dbReference type="UniPathway" id="UPA00908">
    <property type="reaction ID" value="UER00885"/>
</dbReference>
<dbReference type="Proteomes" id="UP000001932">
    <property type="component" value="Chromosome"/>
</dbReference>
<dbReference type="GO" id="GO:0008894">
    <property type="term" value="F:guanosine-5'-triphosphate,3'-diphosphate diphosphatase activity"/>
    <property type="evidence" value="ECO:0007669"/>
    <property type="project" value="UniProtKB-UniRule"/>
</dbReference>
<dbReference type="GO" id="GO:0015974">
    <property type="term" value="P:guanosine pentaphosphate catabolic process"/>
    <property type="evidence" value="ECO:0007669"/>
    <property type="project" value="InterPro"/>
</dbReference>
<dbReference type="GO" id="GO:0015970">
    <property type="term" value="P:guanosine tetraphosphate biosynthetic process"/>
    <property type="evidence" value="ECO:0007669"/>
    <property type="project" value="UniProtKB-UniRule"/>
</dbReference>
<dbReference type="GO" id="GO:0015949">
    <property type="term" value="P:nucleobase-containing small molecule interconversion"/>
    <property type="evidence" value="ECO:0007669"/>
    <property type="project" value="TreeGrafter"/>
</dbReference>
<dbReference type="FunFam" id="1.10.3210.10:FF:000004">
    <property type="entry name" value="Guanosine-5'-triphosphate,3'-diphosphate pyrophosphatase"/>
    <property type="match status" value="1"/>
</dbReference>
<dbReference type="FunFam" id="3.30.420.150:FF:000001">
    <property type="entry name" value="Guanosine-5'-triphosphate,3'-diphosphate pyrophosphatase"/>
    <property type="match status" value="1"/>
</dbReference>
<dbReference type="FunFam" id="3.30.420.40:FF:000023">
    <property type="entry name" value="Guanosine-5'-triphosphate,3'-diphosphate pyrophosphatase"/>
    <property type="match status" value="1"/>
</dbReference>
<dbReference type="Gene3D" id="3.30.420.40">
    <property type="match status" value="1"/>
</dbReference>
<dbReference type="Gene3D" id="3.30.420.150">
    <property type="entry name" value="Exopolyphosphatase. Domain 2"/>
    <property type="match status" value="1"/>
</dbReference>
<dbReference type="Gene3D" id="1.10.3210.10">
    <property type="entry name" value="Hypothetical protein af1432"/>
    <property type="match status" value="1"/>
</dbReference>
<dbReference type="HAMAP" id="MF_01550">
    <property type="entry name" value="GppA"/>
    <property type="match status" value="1"/>
</dbReference>
<dbReference type="InterPro" id="IPR043129">
    <property type="entry name" value="ATPase_NBD"/>
</dbReference>
<dbReference type="InterPro" id="IPR050273">
    <property type="entry name" value="GppA/Ppx_hydrolase"/>
</dbReference>
<dbReference type="InterPro" id="IPR023709">
    <property type="entry name" value="Guo-5TP_3DP_PyrP"/>
</dbReference>
<dbReference type="InterPro" id="IPR048950">
    <property type="entry name" value="Ppx_GppA_C"/>
</dbReference>
<dbReference type="InterPro" id="IPR003695">
    <property type="entry name" value="Ppx_GppA_N"/>
</dbReference>
<dbReference type="InterPro" id="IPR030673">
    <property type="entry name" value="PyroPPase_GppA_Ppx"/>
</dbReference>
<dbReference type="NCBIfam" id="NF008260">
    <property type="entry name" value="PRK11031.1"/>
    <property type="match status" value="1"/>
</dbReference>
<dbReference type="PANTHER" id="PTHR30005">
    <property type="entry name" value="EXOPOLYPHOSPHATASE"/>
    <property type="match status" value="1"/>
</dbReference>
<dbReference type="PANTHER" id="PTHR30005:SF0">
    <property type="entry name" value="RETROGRADE REGULATION PROTEIN 2"/>
    <property type="match status" value="1"/>
</dbReference>
<dbReference type="Pfam" id="PF02541">
    <property type="entry name" value="Ppx-GppA"/>
    <property type="match status" value="1"/>
</dbReference>
<dbReference type="Pfam" id="PF21447">
    <property type="entry name" value="Ppx-GppA_III"/>
    <property type="match status" value="1"/>
</dbReference>
<dbReference type="PIRSF" id="PIRSF001267">
    <property type="entry name" value="Pyrophosphatase_GppA_Ppx"/>
    <property type="match status" value="1"/>
</dbReference>
<dbReference type="SUPFAM" id="SSF53067">
    <property type="entry name" value="Actin-like ATPase domain"/>
    <property type="match status" value="2"/>
</dbReference>
<dbReference type="SUPFAM" id="SSF109604">
    <property type="entry name" value="HD-domain/PDEase-like"/>
    <property type="match status" value="1"/>
</dbReference>
<proteinExistence type="inferred from homology"/>
<accession>Q2NQB1</accession>
<gene>
    <name evidence="1" type="primary">gppA</name>
    <name type="ordered locus">SG2389</name>
</gene>